<name>CYB_DAMME</name>
<dbReference type="EMBL" id="AY607034">
    <property type="protein sequence ID" value="AAU08744.1"/>
    <property type="molecule type" value="Genomic_DNA"/>
</dbReference>
<dbReference type="RefSeq" id="YP_009057562.1">
    <property type="nucleotide sequence ID" value="NC_024819.1"/>
</dbReference>
<dbReference type="SMR" id="Q5UVJ0"/>
<dbReference type="GeneID" id="20355680"/>
<dbReference type="CTD" id="4519"/>
<dbReference type="GO" id="GO:0005743">
    <property type="term" value="C:mitochondrial inner membrane"/>
    <property type="evidence" value="ECO:0007669"/>
    <property type="project" value="UniProtKB-SubCell"/>
</dbReference>
<dbReference type="GO" id="GO:0045275">
    <property type="term" value="C:respiratory chain complex III"/>
    <property type="evidence" value="ECO:0007669"/>
    <property type="project" value="InterPro"/>
</dbReference>
<dbReference type="GO" id="GO:0046872">
    <property type="term" value="F:metal ion binding"/>
    <property type="evidence" value="ECO:0007669"/>
    <property type="project" value="UniProtKB-KW"/>
</dbReference>
<dbReference type="GO" id="GO:0008121">
    <property type="term" value="F:ubiquinol-cytochrome-c reductase activity"/>
    <property type="evidence" value="ECO:0007669"/>
    <property type="project" value="InterPro"/>
</dbReference>
<dbReference type="GO" id="GO:0006122">
    <property type="term" value="P:mitochondrial electron transport, ubiquinol to cytochrome c"/>
    <property type="evidence" value="ECO:0007669"/>
    <property type="project" value="TreeGrafter"/>
</dbReference>
<dbReference type="CDD" id="cd00290">
    <property type="entry name" value="cytochrome_b_C"/>
    <property type="match status" value="1"/>
</dbReference>
<dbReference type="CDD" id="cd00284">
    <property type="entry name" value="Cytochrome_b_N"/>
    <property type="match status" value="1"/>
</dbReference>
<dbReference type="FunFam" id="1.20.810.10:FF:000002">
    <property type="entry name" value="Cytochrome b"/>
    <property type="match status" value="1"/>
</dbReference>
<dbReference type="Gene3D" id="1.20.810.10">
    <property type="entry name" value="Cytochrome Bc1 Complex, Chain C"/>
    <property type="match status" value="1"/>
</dbReference>
<dbReference type="InterPro" id="IPR005798">
    <property type="entry name" value="Cyt_b/b6_C"/>
</dbReference>
<dbReference type="InterPro" id="IPR036150">
    <property type="entry name" value="Cyt_b/b6_C_sf"/>
</dbReference>
<dbReference type="InterPro" id="IPR005797">
    <property type="entry name" value="Cyt_b/b6_N"/>
</dbReference>
<dbReference type="InterPro" id="IPR027387">
    <property type="entry name" value="Cytb/b6-like_sf"/>
</dbReference>
<dbReference type="InterPro" id="IPR030689">
    <property type="entry name" value="Cytochrome_b"/>
</dbReference>
<dbReference type="InterPro" id="IPR048260">
    <property type="entry name" value="Cytochrome_b_C_euk/bac"/>
</dbReference>
<dbReference type="InterPro" id="IPR048259">
    <property type="entry name" value="Cytochrome_b_N_euk/bac"/>
</dbReference>
<dbReference type="InterPro" id="IPR016174">
    <property type="entry name" value="Di-haem_cyt_TM"/>
</dbReference>
<dbReference type="PANTHER" id="PTHR19271">
    <property type="entry name" value="CYTOCHROME B"/>
    <property type="match status" value="1"/>
</dbReference>
<dbReference type="PANTHER" id="PTHR19271:SF16">
    <property type="entry name" value="CYTOCHROME B"/>
    <property type="match status" value="1"/>
</dbReference>
<dbReference type="Pfam" id="PF00032">
    <property type="entry name" value="Cytochrom_B_C"/>
    <property type="match status" value="1"/>
</dbReference>
<dbReference type="Pfam" id="PF00033">
    <property type="entry name" value="Cytochrome_B"/>
    <property type="match status" value="1"/>
</dbReference>
<dbReference type="PIRSF" id="PIRSF038885">
    <property type="entry name" value="COB"/>
    <property type="match status" value="1"/>
</dbReference>
<dbReference type="SUPFAM" id="SSF81648">
    <property type="entry name" value="a domain/subunit of cytochrome bc1 complex (Ubiquinol-cytochrome c reductase)"/>
    <property type="match status" value="1"/>
</dbReference>
<dbReference type="SUPFAM" id="SSF81342">
    <property type="entry name" value="Transmembrane di-heme cytochromes"/>
    <property type="match status" value="1"/>
</dbReference>
<dbReference type="PROSITE" id="PS51003">
    <property type="entry name" value="CYTB_CTER"/>
    <property type="match status" value="1"/>
</dbReference>
<dbReference type="PROSITE" id="PS51002">
    <property type="entry name" value="CYTB_NTER"/>
    <property type="match status" value="1"/>
</dbReference>
<proteinExistence type="inferred from homology"/>
<comment type="function">
    <text evidence="2">Component of the ubiquinol-cytochrome c reductase complex (complex III or cytochrome b-c1 complex) that is part of the mitochondrial respiratory chain. The b-c1 complex mediates electron transfer from ubiquinol to cytochrome c. Contributes to the generation of a proton gradient across the mitochondrial membrane that is then used for ATP synthesis.</text>
</comment>
<comment type="cofactor">
    <cofactor evidence="2">
        <name>heme b</name>
        <dbReference type="ChEBI" id="CHEBI:60344"/>
    </cofactor>
    <text evidence="2">Binds 2 heme b groups non-covalently.</text>
</comment>
<comment type="subunit">
    <text evidence="2">The cytochrome bc1 complex contains 11 subunits: 3 respiratory subunits (MT-CYB, CYC1 and UQCRFS1), 2 core proteins (UQCRC1 and UQCRC2) and 6 low-molecular weight proteins (UQCRH/QCR6, UQCRB/QCR7, UQCRQ/QCR8, UQCR10/QCR9, UQCR11/QCR10 and a cleavage product of UQCRFS1). This cytochrome bc1 complex then forms a dimer.</text>
</comment>
<comment type="subcellular location">
    <subcellularLocation>
        <location evidence="2">Mitochondrion inner membrane</location>
        <topology evidence="2">Multi-pass membrane protein</topology>
    </subcellularLocation>
</comment>
<comment type="miscellaneous">
    <text evidence="1">Heme 1 (or BL or b562) is low-potential and absorbs at about 562 nm, and heme 2 (or BH or b566) is high-potential and absorbs at about 566 nm.</text>
</comment>
<comment type="similarity">
    <text evidence="3 4">Belongs to the cytochrome b family.</text>
</comment>
<comment type="caution">
    <text evidence="2">The full-length protein contains only eight transmembrane helices, not nine as predicted by bioinformatics tools.</text>
</comment>
<accession>Q5UVJ0</accession>
<organism>
    <name type="scientific">Dama mesopotamica</name>
    <name type="common">Mesopotamian fallow deer</name>
    <name type="synonym">Dama dama mesopotamica</name>
    <dbReference type="NCBI Taxonomy" id="141652"/>
    <lineage>
        <taxon>Eukaryota</taxon>
        <taxon>Metazoa</taxon>
        <taxon>Chordata</taxon>
        <taxon>Craniata</taxon>
        <taxon>Vertebrata</taxon>
        <taxon>Euteleostomi</taxon>
        <taxon>Mammalia</taxon>
        <taxon>Eutheria</taxon>
        <taxon>Laurasiatheria</taxon>
        <taxon>Artiodactyla</taxon>
        <taxon>Ruminantia</taxon>
        <taxon>Pecora</taxon>
        <taxon>Cervidae</taxon>
        <taxon>Cervinae</taxon>
        <taxon>Dama</taxon>
    </lineage>
</organism>
<geneLocation type="mitochondrion"/>
<keyword id="KW-0249">Electron transport</keyword>
<keyword id="KW-0349">Heme</keyword>
<keyword id="KW-0408">Iron</keyword>
<keyword id="KW-0472">Membrane</keyword>
<keyword id="KW-0479">Metal-binding</keyword>
<keyword id="KW-0496">Mitochondrion</keyword>
<keyword id="KW-0999">Mitochondrion inner membrane</keyword>
<keyword id="KW-0679">Respiratory chain</keyword>
<keyword id="KW-0812">Transmembrane</keyword>
<keyword id="KW-1133">Transmembrane helix</keyword>
<keyword id="KW-0813">Transport</keyword>
<keyword id="KW-0830">Ubiquinone</keyword>
<protein>
    <recommendedName>
        <fullName>Cytochrome b</fullName>
    </recommendedName>
    <alternativeName>
        <fullName>Complex III subunit 3</fullName>
    </alternativeName>
    <alternativeName>
        <fullName>Complex III subunit III</fullName>
    </alternativeName>
    <alternativeName>
        <fullName>Cytochrome b-c1 complex subunit 3</fullName>
    </alternativeName>
    <alternativeName>
        <fullName>Ubiquinol-cytochrome-c reductase complex cytochrome b subunit</fullName>
    </alternativeName>
</protein>
<sequence length="379" mass="42917">MINIRKTHPLMKIVNNAFIDLPAPSNISSWWNFGSLLGICLILQILTGLFLAMHYTSDTMTAFSSVTHICRDVNYGWIIRYMHANGASMFFICLFMHVGRGLYYGSYTFLETWNIGVILLFTVMATAFVGYVLPWGQMSFWGATVITNLLSAIPYIGTNLVEWIWGGFSVDKATLTRFFAFHFILPFIIAALAMVHLLFLHETGSNNPTGISSDADKIPFHPYYTIKDILGILFLVFFLMLLVLFAPDLLGDPDNYTPANPLNTPPHIKPEWYFLFAYAILRSIPNKLGGVLALVSSILVLILMPLLHTSKQRSMMFRPFSQCLFWVLVADLLTLTWIGGQPVEYPFIIIGQLASILYFLIILVLMPIISTIENNLMKW</sequence>
<reference key="1">
    <citation type="journal article" date="2004" name="Mol. Phylogenet. Evol.">
        <title>Evolution and phylogeny of old world deer.</title>
        <authorList>
            <person name="Pitra C."/>
            <person name="Fickel J."/>
            <person name="Meijaard E."/>
            <person name="Groves P.C."/>
        </authorList>
    </citation>
    <scope>NUCLEOTIDE SEQUENCE [GENOMIC DNA]</scope>
</reference>
<evidence type="ECO:0000250" key="1"/>
<evidence type="ECO:0000250" key="2">
    <source>
        <dbReference type="UniProtKB" id="P00157"/>
    </source>
</evidence>
<evidence type="ECO:0000255" key="3">
    <source>
        <dbReference type="PROSITE-ProRule" id="PRU00967"/>
    </source>
</evidence>
<evidence type="ECO:0000255" key="4">
    <source>
        <dbReference type="PROSITE-ProRule" id="PRU00968"/>
    </source>
</evidence>
<gene>
    <name type="primary">MT-CYB</name>
    <name type="synonym">COB</name>
    <name type="synonym">CYTB</name>
    <name type="synonym">MTCYB</name>
</gene>
<feature type="chain" id="PRO_0000060858" description="Cytochrome b">
    <location>
        <begin position="1"/>
        <end position="379"/>
    </location>
</feature>
<feature type="transmembrane region" description="Helical" evidence="2">
    <location>
        <begin position="33"/>
        <end position="53"/>
    </location>
</feature>
<feature type="transmembrane region" description="Helical" evidence="2">
    <location>
        <begin position="77"/>
        <end position="98"/>
    </location>
</feature>
<feature type="transmembrane region" description="Helical" evidence="2">
    <location>
        <begin position="113"/>
        <end position="133"/>
    </location>
</feature>
<feature type="transmembrane region" description="Helical" evidence="2">
    <location>
        <begin position="178"/>
        <end position="198"/>
    </location>
</feature>
<feature type="transmembrane region" description="Helical" evidence="2">
    <location>
        <begin position="226"/>
        <end position="246"/>
    </location>
</feature>
<feature type="transmembrane region" description="Helical" evidence="2">
    <location>
        <begin position="288"/>
        <end position="308"/>
    </location>
</feature>
<feature type="transmembrane region" description="Helical" evidence="2">
    <location>
        <begin position="320"/>
        <end position="340"/>
    </location>
</feature>
<feature type="transmembrane region" description="Helical" evidence="2">
    <location>
        <begin position="347"/>
        <end position="367"/>
    </location>
</feature>
<feature type="binding site" description="axial binding residue" evidence="2">
    <location>
        <position position="83"/>
    </location>
    <ligand>
        <name>heme b</name>
        <dbReference type="ChEBI" id="CHEBI:60344"/>
        <label>b562</label>
    </ligand>
    <ligandPart>
        <name>Fe</name>
        <dbReference type="ChEBI" id="CHEBI:18248"/>
    </ligandPart>
</feature>
<feature type="binding site" description="axial binding residue" evidence="2">
    <location>
        <position position="97"/>
    </location>
    <ligand>
        <name>heme b</name>
        <dbReference type="ChEBI" id="CHEBI:60344"/>
        <label>b566</label>
    </ligand>
    <ligandPart>
        <name>Fe</name>
        <dbReference type="ChEBI" id="CHEBI:18248"/>
    </ligandPart>
</feature>
<feature type="binding site" description="axial binding residue" evidence="2">
    <location>
        <position position="182"/>
    </location>
    <ligand>
        <name>heme b</name>
        <dbReference type="ChEBI" id="CHEBI:60344"/>
        <label>b562</label>
    </ligand>
    <ligandPart>
        <name>Fe</name>
        <dbReference type="ChEBI" id="CHEBI:18248"/>
    </ligandPart>
</feature>
<feature type="binding site" description="axial binding residue" evidence="2">
    <location>
        <position position="196"/>
    </location>
    <ligand>
        <name>heme b</name>
        <dbReference type="ChEBI" id="CHEBI:60344"/>
        <label>b566</label>
    </ligand>
    <ligandPart>
        <name>Fe</name>
        <dbReference type="ChEBI" id="CHEBI:18248"/>
    </ligandPart>
</feature>
<feature type="binding site" evidence="2">
    <location>
        <position position="201"/>
    </location>
    <ligand>
        <name>a ubiquinone</name>
        <dbReference type="ChEBI" id="CHEBI:16389"/>
    </ligand>
</feature>